<dbReference type="EMBL" id="FM180568">
    <property type="protein sequence ID" value="CAS11119.1"/>
    <property type="molecule type" value="Genomic_DNA"/>
</dbReference>
<dbReference type="RefSeq" id="WP_001096200.1">
    <property type="nucleotide sequence ID" value="NC_011601.1"/>
</dbReference>
<dbReference type="SMR" id="B7UK32"/>
<dbReference type="GeneID" id="93778679"/>
<dbReference type="KEGG" id="ecg:E2348C_3571"/>
<dbReference type="HOGENOM" id="CLU_061015_2_1_6"/>
<dbReference type="Proteomes" id="UP000008205">
    <property type="component" value="Chromosome"/>
</dbReference>
<dbReference type="GO" id="GO:1990904">
    <property type="term" value="C:ribonucleoprotein complex"/>
    <property type="evidence" value="ECO:0007669"/>
    <property type="project" value="UniProtKB-KW"/>
</dbReference>
<dbReference type="GO" id="GO:0005840">
    <property type="term" value="C:ribosome"/>
    <property type="evidence" value="ECO:0007669"/>
    <property type="project" value="UniProtKB-KW"/>
</dbReference>
<dbReference type="GO" id="GO:0019843">
    <property type="term" value="F:rRNA binding"/>
    <property type="evidence" value="ECO:0007669"/>
    <property type="project" value="UniProtKB-UniRule"/>
</dbReference>
<dbReference type="GO" id="GO:0003735">
    <property type="term" value="F:structural constituent of ribosome"/>
    <property type="evidence" value="ECO:0007669"/>
    <property type="project" value="InterPro"/>
</dbReference>
<dbReference type="GO" id="GO:0000049">
    <property type="term" value="F:tRNA binding"/>
    <property type="evidence" value="ECO:0007669"/>
    <property type="project" value="UniProtKB-UniRule"/>
</dbReference>
<dbReference type="GO" id="GO:0006412">
    <property type="term" value="P:translation"/>
    <property type="evidence" value="ECO:0007669"/>
    <property type="project" value="UniProtKB-UniRule"/>
</dbReference>
<dbReference type="FunFam" id="3.30.1440.10:FF:000001">
    <property type="entry name" value="50S ribosomal protein L5"/>
    <property type="match status" value="1"/>
</dbReference>
<dbReference type="Gene3D" id="3.30.1440.10">
    <property type="match status" value="1"/>
</dbReference>
<dbReference type="HAMAP" id="MF_01333_B">
    <property type="entry name" value="Ribosomal_uL5_B"/>
    <property type="match status" value="1"/>
</dbReference>
<dbReference type="InterPro" id="IPR002132">
    <property type="entry name" value="Ribosomal_uL5"/>
</dbReference>
<dbReference type="InterPro" id="IPR020930">
    <property type="entry name" value="Ribosomal_uL5_bac-type"/>
</dbReference>
<dbReference type="InterPro" id="IPR031309">
    <property type="entry name" value="Ribosomal_uL5_C"/>
</dbReference>
<dbReference type="InterPro" id="IPR020929">
    <property type="entry name" value="Ribosomal_uL5_CS"/>
</dbReference>
<dbReference type="InterPro" id="IPR022803">
    <property type="entry name" value="Ribosomal_uL5_dom_sf"/>
</dbReference>
<dbReference type="InterPro" id="IPR031310">
    <property type="entry name" value="Ribosomal_uL5_N"/>
</dbReference>
<dbReference type="NCBIfam" id="NF000585">
    <property type="entry name" value="PRK00010.1"/>
    <property type="match status" value="1"/>
</dbReference>
<dbReference type="PANTHER" id="PTHR11994">
    <property type="entry name" value="60S RIBOSOMAL PROTEIN L11-RELATED"/>
    <property type="match status" value="1"/>
</dbReference>
<dbReference type="Pfam" id="PF00281">
    <property type="entry name" value="Ribosomal_L5"/>
    <property type="match status" value="1"/>
</dbReference>
<dbReference type="Pfam" id="PF00673">
    <property type="entry name" value="Ribosomal_L5_C"/>
    <property type="match status" value="1"/>
</dbReference>
<dbReference type="PIRSF" id="PIRSF002161">
    <property type="entry name" value="Ribosomal_L5"/>
    <property type="match status" value="1"/>
</dbReference>
<dbReference type="SUPFAM" id="SSF55282">
    <property type="entry name" value="RL5-like"/>
    <property type="match status" value="1"/>
</dbReference>
<dbReference type="PROSITE" id="PS00358">
    <property type="entry name" value="RIBOSOMAL_L5"/>
    <property type="match status" value="1"/>
</dbReference>
<proteinExistence type="inferred from homology"/>
<reference key="1">
    <citation type="journal article" date="2009" name="J. Bacteriol.">
        <title>Complete genome sequence and comparative genome analysis of enteropathogenic Escherichia coli O127:H6 strain E2348/69.</title>
        <authorList>
            <person name="Iguchi A."/>
            <person name="Thomson N.R."/>
            <person name="Ogura Y."/>
            <person name="Saunders D."/>
            <person name="Ooka T."/>
            <person name="Henderson I.R."/>
            <person name="Harris D."/>
            <person name="Asadulghani M."/>
            <person name="Kurokawa K."/>
            <person name="Dean P."/>
            <person name="Kenny B."/>
            <person name="Quail M.A."/>
            <person name="Thurston S."/>
            <person name="Dougan G."/>
            <person name="Hayashi T."/>
            <person name="Parkhill J."/>
            <person name="Frankel G."/>
        </authorList>
    </citation>
    <scope>NUCLEOTIDE SEQUENCE [LARGE SCALE GENOMIC DNA]</scope>
    <source>
        <strain>E2348/69 / EPEC</strain>
    </source>
</reference>
<accession>B7UK32</accession>
<feature type="chain" id="PRO_1000166131" description="Large ribosomal subunit protein uL5">
    <location>
        <begin position="1"/>
        <end position="179"/>
    </location>
</feature>
<feature type="modified residue" description="N6-acetyllysine" evidence="1">
    <location>
        <position position="3"/>
    </location>
</feature>
<name>RL5_ECO27</name>
<comment type="function">
    <text evidence="1">This is one of the proteins that bind and probably mediate the attachment of the 5S RNA into the large ribosomal subunit, where it forms part of the central protuberance. In the 70S ribosome it contacts protein S13 of the 30S subunit (bridge B1b), connecting the 2 subunits; this bridge is implicated in subunit movement. Contacts the P site tRNA; the 5S rRNA and some of its associated proteins might help stabilize positioning of ribosome-bound tRNAs.</text>
</comment>
<comment type="subunit">
    <text evidence="1">Part of the 50S ribosomal subunit; part of the 5S rRNA/L5/L18/L25 subcomplex. Contacts the 5S rRNA and the P site tRNA. Forms a bridge to the 30S subunit in the 70S ribosome.</text>
</comment>
<comment type="similarity">
    <text evidence="1">Belongs to the universal ribosomal protein uL5 family.</text>
</comment>
<gene>
    <name evidence="1" type="primary">rplE</name>
    <name type="ordered locus">E2348C_3571</name>
</gene>
<evidence type="ECO:0000255" key="1">
    <source>
        <dbReference type="HAMAP-Rule" id="MF_01333"/>
    </source>
</evidence>
<evidence type="ECO:0000305" key="2"/>
<sequence length="179" mass="20302">MAKLHDYYKDEVVKKLMTEFNYNSVMQVPRVEKITLNMGVGEAIADKKLLDNAAADLAAISGQKPLITKARKSVAGFKIRQGYPIGCKVTLRGERMWEFFERLITIAVPRIRDFRGLSAKSFDGRGNYSMGVREQIIFPEIDYDKVDRVRGLDITITTTAKSDEEGRALLAAFDFPFRK</sequence>
<keyword id="KW-0007">Acetylation</keyword>
<keyword id="KW-1185">Reference proteome</keyword>
<keyword id="KW-0687">Ribonucleoprotein</keyword>
<keyword id="KW-0689">Ribosomal protein</keyword>
<keyword id="KW-0694">RNA-binding</keyword>
<keyword id="KW-0699">rRNA-binding</keyword>
<keyword id="KW-0820">tRNA-binding</keyword>
<organism>
    <name type="scientific">Escherichia coli O127:H6 (strain E2348/69 / EPEC)</name>
    <dbReference type="NCBI Taxonomy" id="574521"/>
    <lineage>
        <taxon>Bacteria</taxon>
        <taxon>Pseudomonadati</taxon>
        <taxon>Pseudomonadota</taxon>
        <taxon>Gammaproteobacteria</taxon>
        <taxon>Enterobacterales</taxon>
        <taxon>Enterobacteriaceae</taxon>
        <taxon>Escherichia</taxon>
    </lineage>
</organism>
<protein>
    <recommendedName>
        <fullName evidence="1">Large ribosomal subunit protein uL5</fullName>
    </recommendedName>
    <alternativeName>
        <fullName evidence="2">50S ribosomal protein L5</fullName>
    </alternativeName>
</protein>